<feature type="signal peptide" evidence="1">
    <location>
        <begin position="1"/>
        <end position="24"/>
    </location>
</feature>
<feature type="chain" id="PRO_0000282407" description="Coiled-coil domain-containing protein 107">
    <location>
        <begin position="25"/>
        <end position="283"/>
    </location>
</feature>
<feature type="transmembrane region" description="Helical" evidence="1">
    <location>
        <begin position="65"/>
        <end position="85"/>
    </location>
</feature>
<feature type="region of interest" description="Disordered" evidence="2">
    <location>
        <begin position="30"/>
        <end position="62"/>
    </location>
</feature>
<feature type="region of interest" description="Disordered" evidence="2">
    <location>
        <begin position="164"/>
        <end position="207"/>
    </location>
</feature>
<feature type="region of interest" description="Disordered" evidence="2">
    <location>
        <begin position="258"/>
        <end position="283"/>
    </location>
</feature>
<feature type="coiled-coil region" evidence="1">
    <location>
        <begin position="104"/>
        <end position="134"/>
    </location>
</feature>
<feature type="compositionally biased region" description="Basic and acidic residues" evidence="2">
    <location>
        <begin position="47"/>
        <end position="62"/>
    </location>
</feature>
<feature type="compositionally biased region" description="Gly residues" evidence="2">
    <location>
        <begin position="176"/>
        <end position="187"/>
    </location>
</feature>
<feature type="splice variant" id="VSP_024128" description="In isoform 4." evidence="9">
    <original>EQQLAQLTQQLAQ</original>
    <variation>GGFSRSLCWVGGV</variation>
    <location>
        <begin position="107"/>
        <end position="119"/>
    </location>
</feature>
<feature type="splice variant" id="VSP_024129" description="In isoform 4." evidence="9">
    <location>
        <begin position="120"/>
        <end position="283"/>
    </location>
</feature>
<feature type="splice variant" id="VSP_024130" description="In isoform 2." evidence="7">
    <original>VTTLAGAQQELLNMKLWT</original>
    <variation>PAGASEHEAMDHPRAAAR</variation>
    <location>
        <begin position="138"/>
        <end position="155"/>
    </location>
</feature>
<feature type="splice variant" id="VSP_024131" description="In isoform 3." evidence="6">
    <original>VT</original>
    <variation>SF</variation>
    <location>
        <begin position="138"/>
        <end position="139"/>
    </location>
</feature>
<feature type="splice variant" id="VSP_024132" description="In isoform 3." evidence="6">
    <location>
        <begin position="140"/>
        <end position="283"/>
    </location>
</feature>
<feature type="splice variant" id="VSP_024133" description="In isoform 2." evidence="7">
    <location>
        <begin position="156"/>
        <end position="283"/>
    </location>
</feature>
<feature type="splice variant" id="VSP_042165" description="In isoform 5." evidence="8">
    <location>
        <begin position="175"/>
        <end position="201"/>
    </location>
</feature>
<feature type="sequence variant" id="VAR_031406" description="In dbSNP:rs2275420.">
    <original>S</original>
    <variation>F</variation>
    <location>
        <position position="190"/>
    </location>
</feature>
<feature type="sequence variant" id="VAR_031407" description="In dbSNP:rs1339374." evidence="3 4 5">
    <original>I</original>
    <variation>V</variation>
    <location>
        <position position="220"/>
    </location>
</feature>
<feature type="sequence variant" id="VAR_031408" description="In dbSNP:rs10441685.">
    <original>S</original>
    <variation>C</variation>
    <location>
        <position position="242"/>
    </location>
</feature>
<dbReference type="EMBL" id="DQ884403">
    <property type="protein sequence ID" value="ABI63370.1"/>
    <property type="molecule type" value="mRNA"/>
</dbReference>
<dbReference type="EMBL" id="AK075523">
    <property type="protein sequence ID" value="BAC11669.1"/>
    <property type="molecule type" value="mRNA"/>
</dbReference>
<dbReference type="EMBL" id="AL357874">
    <property type="status" value="NOT_ANNOTATED_CDS"/>
    <property type="molecule type" value="Genomic_DNA"/>
</dbReference>
<dbReference type="EMBL" id="CH471071">
    <property type="protein sequence ID" value="EAW58369.1"/>
    <property type="molecule type" value="Genomic_DNA"/>
</dbReference>
<dbReference type="EMBL" id="BC018758">
    <property type="protein sequence ID" value="AAH18758.1"/>
    <property type="molecule type" value="mRNA"/>
</dbReference>
<dbReference type="EMBL" id="BC051285">
    <property type="protein sequence ID" value="AAH51285.1"/>
    <property type="molecule type" value="mRNA"/>
</dbReference>
<dbReference type="CCDS" id="CCDS56573.1">
    <molecule id="Q8WV48-5"/>
</dbReference>
<dbReference type="CCDS" id="CCDS56574.1">
    <molecule id="Q8WV48-2"/>
</dbReference>
<dbReference type="CCDS" id="CCDS56575.1">
    <molecule id="Q8WV48-3"/>
</dbReference>
<dbReference type="CCDS" id="CCDS6583.1">
    <molecule id="Q8WV48-1"/>
</dbReference>
<dbReference type="RefSeq" id="NP_001182129.1">
    <molecule id="Q8WV48-5"/>
    <property type="nucleotide sequence ID" value="NM_001195200.2"/>
</dbReference>
<dbReference type="RefSeq" id="NP_001182130.1">
    <molecule id="Q8WV48-2"/>
    <property type="nucleotide sequence ID" value="NM_001195201.2"/>
</dbReference>
<dbReference type="RefSeq" id="NP_001182146.1">
    <molecule id="Q8WV48-3"/>
    <property type="nucleotide sequence ID" value="NM_001195217.2"/>
</dbReference>
<dbReference type="RefSeq" id="NP_777583.2">
    <molecule id="Q8WV48-1"/>
    <property type="nucleotide sequence ID" value="NM_174923.3"/>
</dbReference>
<dbReference type="SMR" id="Q8WV48"/>
<dbReference type="BioGRID" id="128462">
    <property type="interactions" value="70"/>
</dbReference>
<dbReference type="FunCoup" id="Q8WV48">
    <property type="interactions" value="24"/>
</dbReference>
<dbReference type="IntAct" id="Q8WV48">
    <property type="interactions" value="65"/>
</dbReference>
<dbReference type="MINT" id="Q8WV48"/>
<dbReference type="STRING" id="9606.ENSP00000414964"/>
<dbReference type="iPTMnet" id="Q8WV48"/>
<dbReference type="PhosphoSitePlus" id="Q8WV48"/>
<dbReference type="BioMuta" id="CCDC107"/>
<dbReference type="DMDM" id="143955294"/>
<dbReference type="MassIVE" id="Q8WV48"/>
<dbReference type="PaxDb" id="9606-ENSP00000414964"/>
<dbReference type="PeptideAtlas" id="Q8WV48"/>
<dbReference type="ProteomicsDB" id="74751">
    <molecule id="Q8WV48-1"/>
</dbReference>
<dbReference type="ProteomicsDB" id="74752">
    <molecule id="Q8WV48-2"/>
</dbReference>
<dbReference type="ProteomicsDB" id="74753">
    <molecule id="Q8WV48-3"/>
</dbReference>
<dbReference type="ProteomicsDB" id="74754">
    <molecule id="Q8WV48-4"/>
</dbReference>
<dbReference type="ProteomicsDB" id="74755">
    <molecule id="Q8WV48-5"/>
</dbReference>
<dbReference type="Pumba" id="Q8WV48"/>
<dbReference type="Antibodypedia" id="51334">
    <property type="antibodies" value="58 antibodies from 14 providers"/>
</dbReference>
<dbReference type="DNASU" id="203260"/>
<dbReference type="Ensembl" id="ENST00000327351.6">
    <molecule id="Q8WV48-2"/>
    <property type="protein sequence ID" value="ENSP00000330327.2"/>
    <property type="gene ID" value="ENSG00000159884.12"/>
</dbReference>
<dbReference type="Ensembl" id="ENST00000378407.7">
    <molecule id="Q8WV48-3"/>
    <property type="protein sequence ID" value="ENSP00000367662.3"/>
    <property type="gene ID" value="ENSG00000159884.12"/>
</dbReference>
<dbReference type="Ensembl" id="ENST00000378409.7">
    <molecule id="Q8WV48-5"/>
    <property type="protein sequence ID" value="ENSP00000367665.3"/>
    <property type="gene ID" value="ENSG00000159884.12"/>
</dbReference>
<dbReference type="Ensembl" id="ENST00000421582.2">
    <molecule id="Q8WV48-4"/>
    <property type="protein sequence ID" value="ENSP00000413003.2"/>
    <property type="gene ID" value="ENSG00000159884.12"/>
</dbReference>
<dbReference type="Ensembl" id="ENST00000426546.7">
    <molecule id="Q8WV48-1"/>
    <property type="protein sequence ID" value="ENSP00000414964.2"/>
    <property type="gene ID" value="ENSG00000159884.12"/>
</dbReference>
<dbReference type="GeneID" id="203260"/>
<dbReference type="KEGG" id="hsa:203260"/>
<dbReference type="MANE-Select" id="ENST00000426546.7">
    <property type="protein sequence ID" value="ENSP00000414964.2"/>
    <property type="RefSeq nucleotide sequence ID" value="NM_174923.3"/>
    <property type="RefSeq protein sequence ID" value="NP_777583.2"/>
</dbReference>
<dbReference type="UCSC" id="uc003zxj.4">
    <molecule id="Q8WV48-1"/>
    <property type="organism name" value="human"/>
</dbReference>
<dbReference type="AGR" id="HGNC:28465"/>
<dbReference type="CTD" id="203260"/>
<dbReference type="DisGeNET" id="203260"/>
<dbReference type="GeneCards" id="CCDC107"/>
<dbReference type="HGNC" id="HGNC:28465">
    <property type="gene designation" value="CCDC107"/>
</dbReference>
<dbReference type="HPA" id="ENSG00000159884">
    <property type="expression patterns" value="Low tissue specificity"/>
</dbReference>
<dbReference type="MalaCards" id="CCDC107"/>
<dbReference type="neXtProt" id="NX_Q8WV48"/>
<dbReference type="OpenTargets" id="ENSG00000159884"/>
<dbReference type="PharmGKB" id="PA145008668"/>
<dbReference type="VEuPathDB" id="HostDB:ENSG00000159884"/>
<dbReference type="eggNOG" id="ENOG502QQ24">
    <property type="taxonomic scope" value="Eukaryota"/>
</dbReference>
<dbReference type="GeneTree" id="ENSGT00390000018608"/>
<dbReference type="HOGENOM" id="CLU_097023_0_0_1"/>
<dbReference type="InParanoid" id="Q8WV48"/>
<dbReference type="OMA" id="NQAWEEP"/>
<dbReference type="OrthoDB" id="9904035at2759"/>
<dbReference type="PAN-GO" id="Q8WV48">
    <property type="GO annotations" value="0 GO annotations based on evolutionary models"/>
</dbReference>
<dbReference type="PhylomeDB" id="Q8WV48"/>
<dbReference type="TreeFam" id="TF333319"/>
<dbReference type="PathwayCommons" id="Q8WV48"/>
<dbReference type="SignaLink" id="Q8WV48"/>
<dbReference type="BioGRID-ORCS" id="203260">
    <property type="hits" value="46 hits in 1155 CRISPR screens"/>
</dbReference>
<dbReference type="ChiTaRS" id="CCDC107">
    <property type="organism name" value="human"/>
</dbReference>
<dbReference type="GenomeRNAi" id="203260"/>
<dbReference type="Pharos" id="Q8WV48">
    <property type="development level" value="Tdark"/>
</dbReference>
<dbReference type="PRO" id="PR:Q8WV48"/>
<dbReference type="Proteomes" id="UP000005640">
    <property type="component" value="Chromosome 9"/>
</dbReference>
<dbReference type="RNAct" id="Q8WV48">
    <property type="molecule type" value="protein"/>
</dbReference>
<dbReference type="Bgee" id="ENSG00000159884">
    <property type="expression patterns" value="Expressed in popliteal artery and 184 other cell types or tissues"/>
</dbReference>
<dbReference type="ExpressionAtlas" id="Q8WV48">
    <property type="expression patterns" value="baseline and differential"/>
</dbReference>
<dbReference type="GO" id="GO:0016020">
    <property type="term" value="C:membrane"/>
    <property type="evidence" value="ECO:0007669"/>
    <property type="project" value="UniProtKB-SubCell"/>
</dbReference>
<dbReference type="InterPro" id="IPR038779">
    <property type="entry name" value="CCDC107"/>
</dbReference>
<dbReference type="PANTHER" id="PTHR37345">
    <property type="entry name" value="COILED-COIL DOMAIN-CONTAINING PROTEIN 107"/>
    <property type="match status" value="1"/>
</dbReference>
<dbReference type="PANTHER" id="PTHR37345:SF1">
    <property type="entry name" value="COILED-COIL DOMAIN-CONTAINING PROTEIN 107"/>
    <property type="match status" value="1"/>
</dbReference>
<sequence>MAGAVSLLGVVGLLLVSALSGVLGDRANPDLRAHPGNAAHPGSGATEPRRRPPLKDQRERTRAGSLPLGALYTAAVAAFVLYKCLQGKDETAVLHEEASKQQPLQSEQQLAQLTQQLAQTEQHLNNLMAQLDPLFERVTTLAGAQQELLNMKLWTIHELLQDSKPDKDMEASEPGEGSGGESAGGGDKVSETGTFLISPHTEASRPLPEDFCLKEDEEEIGDSQAWEEPTNWSTETWNLATSWEVGRGLRRRCSQAVAKGPSHSLGWEGGTTAEGRLKQSLFS</sequence>
<comment type="interaction">
    <interactant intactId="EBI-947033">
        <id>Q8WV48</id>
    </interactant>
    <interactant intactId="EBI-11277970">
        <id>Q9UHX3</id>
        <label>ADGRE2</label>
    </interactant>
    <organismsDiffer>false</organismsDiffer>
    <experiments>3</experiments>
</comment>
<comment type="interaction">
    <interactant intactId="EBI-947033">
        <id>Q8WV48</id>
    </interactant>
    <interactant intactId="EBI-10827839">
        <id>Q15848</id>
        <label>ADIPOQ</label>
    </interactant>
    <organismsDiffer>false</organismsDiffer>
    <experiments>3</experiments>
</comment>
<comment type="interaction">
    <interactant intactId="EBI-947033">
        <id>Q8WV48</id>
    </interactant>
    <interactant intactId="EBI-10232876">
        <id>Q14416</id>
        <label>GRM2</label>
    </interactant>
    <organismsDiffer>false</organismsDiffer>
    <experiments>3</experiments>
</comment>
<comment type="interaction">
    <interactant intactId="EBI-947033">
        <id>Q8WV48</id>
    </interactant>
    <interactant intactId="EBI-12147661">
        <id>P78383</id>
        <label>SLC35B1</label>
    </interactant>
    <organismsDiffer>false</organismsDiffer>
    <experiments>3</experiments>
</comment>
<comment type="interaction">
    <interactant intactId="EBI-947033">
        <id>Q8WV48</id>
    </interactant>
    <interactant intactId="EBI-359977">
        <id>P01375</id>
        <label>TNF</label>
    </interactant>
    <organismsDiffer>false</organismsDiffer>
    <experiments>3</experiments>
</comment>
<comment type="interaction">
    <interactant intactId="EBI-947033">
        <id>Q8WV48</id>
    </interactant>
    <interactant intactId="EBI-4401271">
        <id>Q9H1C4</id>
        <label>UNC93B1</label>
    </interactant>
    <organismsDiffer>false</organismsDiffer>
    <experiments>3</experiments>
</comment>
<comment type="subcellular location">
    <subcellularLocation>
        <location evidence="9">Membrane</location>
        <topology evidence="9">Single-pass membrane protein</topology>
    </subcellularLocation>
</comment>
<comment type="alternative products">
    <event type="alternative splicing"/>
    <isoform>
        <id>Q8WV48-1</id>
        <name>1</name>
        <sequence type="displayed"/>
    </isoform>
    <isoform>
        <id>Q8WV48-2</id>
        <name>2</name>
        <sequence type="described" ref="VSP_024130 VSP_024133"/>
    </isoform>
    <isoform>
        <id>Q8WV48-3</id>
        <name>3</name>
        <sequence type="described" ref="VSP_024131 VSP_024132"/>
    </isoform>
    <isoform>
        <id>Q8WV48-4</id>
        <name>4</name>
        <sequence type="described" ref="VSP_024128 VSP_024129"/>
    </isoform>
    <isoform>
        <id>Q8WV48-5</id>
        <name>5</name>
        <sequence type="described" ref="VSP_042165"/>
    </isoform>
</comment>
<reference key="1">
    <citation type="submission" date="2006-07" db="EMBL/GenBank/DDBJ databases">
        <title>A computer system platform used to predict novel genes.</title>
        <authorList>
            <person name="Yu Z."/>
            <person name="Zheng Z."/>
            <person name="Tang T."/>
            <person name="Fu Y."/>
        </authorList>
    </citation>
    <scope>NUCLEOTIDE SEQUENCE [MRNA] (ISOFORM 5)</scope>
    <scope>VARIANT VAL-220</scope>
</reference>
<reference key="2">
    <citation type="journal article" date="2004" name="Nat. Genet.">
        <title>Complete sequencing and characterization of 21,243 full-length human cDNAs.</title>
        <authorList>
            <person name="Ota T."/>
            <person name="Suzuki Y."/>
            <person name="Nishikawa T."/>
            <person name="Otsuki T."/>
            <person name="Sugiyama T."/>
            <person name="Irie R."/>
            <person name="Wakamatsu A."/>
            <person name="Hayashi K."/>
            <person name="Sato H."/>
            <person name="Nagai K."/>
            <person name="Kimura K."/>
            <person name="Makita H."/>
            <person name="Sekine M."/>
            <person name="Obayashi M."/>
            <person name="Nishi T."/>
            <person name="Shibahara T."/>
            <person name="Tanaka T."/>
            <person name="Ishii S."/>
            <person name="Yamamoto J."/>
            <person name="Saito K."/>
            <person name="Kawai Y."/>
            <person name="Isono Y."/>
            <person name="Nakamura Y."/>
            <person name="Nagahari K."/>
            <person name="Murakami K."/>
            <person name="Yasuda T."/>
            <person name="Iwayanagi T."/>
            <person name="Wagatsuma M."/>
            <person name="Shiratori A."/>
            <person name="Sudo H."/>
            <person name="Hosoiri T."/>
            <person name="Kaku Y."/>
            <person name="Kodaira H."/>
            <person name="Kondo H."/>
            <person name="Sugawara M."/>
            <person name="Takahashi M."/>
            <person name="Kanda K."/>
            <person name="Yokoi T."/>
            <person name="Furuya T."/>
            <person name="Kikkawa E."/>
            <person name="Omura Y."/>
            <person name="Abe K."/>
            <person name="Kamihara K."/>
            <person name="Katsuta N."/>
            <person name="Sato K."/>
            <person name="Tanikawa M."/>
            <person name="Yamazaki M."/>
            <person name="Ninomiya K."/>
            <person name="Ishibashi T."/>
            <person name="Yamashita H."/>
            <person name="Murakawa K."/>
            <person name="Fujimori K."/>
            <person name="Tanai H."/>
            <person name="Kimata M."/>
            <person name="Watanabe M."/>
            <person name="Hiraoka S."/>
            <person name="Chiba Y."/>
            <person name="Ishida S."/>
            <person name="Ono Y."/>
            <person name="Takiguchi S."/>
            <person name="Watanabe S."/>
            <person name="Yosida M."/>
            <person name="Hotuta T."/>
            <person name="Kusano J."/>
            <person name="Kanehori K."/>
            <person name="Takahashi-Fujii A."/>
            <person name="Hara H."/>
            <person name="Tanase T.-O."/>
            <person name="Nomura Y."/>
            <person name="Togiya S."/>
            <person name="Komai F."/>
            <person name="Hara R."/>
            <person name="Takeuchi K."/>
            <person name="Arita M."/>
            <person name="Imose N."/>
            <person name="Musashino K."/>
            <person name="Yuuki H."/>
            <person name="Oshima A."/>
            <person name="Sasaki N."/>
            <person name="Aotsuka S."/>
            <person name="Yoshikawa Y."/>
            <person name="Matsunawa H."/>
            <person name="Ichihara T."/>
            <person name="Shiohata N."/>
            <person name="Sano S."/>
            <person name="Moriya S."/>
            <person name="Momiyama H."/>
            <person name="Satoh N."/>
            <person name="Takami S."/>
            <person name="Terashima Y."/>
            <person name="Suzuki O."/>
            <person name="Nakagawa S."/>
            <person name="Senoh A."/>
            <person name="Mizoguchi H."/>
            <person name="Goto Y."/>
            <person name="Shimizu F."/>
            <person name="Wakebe H."/>
            <person name="Hishigaki H."/>
            <person name="Watanabe T."/>
            <person name="Sugiyama A."/>
            <person name="Takemoto M."/>
            <person name="Kawakami B."/>
            <person name="Yamazaki M."/>
            <person name="Watanabe K."/>
            <person name="Kumagai A."/>
            <person name="Itakura S."/>
            <person name="Fukuzumi Y."/>
            <person name="Fujimori Y."/>
            <person name="Komiyama M."/>
            <person name="Tashiro H."/>
            <person name="Tanigami A."/>
            <person name="Fujiwara T."/>
            <person name="Ono T."/>
            <person name="Yamada K."/>
            <person name="Fujii Y."/>
            <person name="Ozaki K."/>
            <person name="Hirao M."/>
            <person name="Ohmori Y."/>
            <person name="Kawabata A."/>
            <person name="Hikiji T."/>
            <person name="Kobatake N."/>
            <person name="Inagaki H."/>
            <person name="Ikema Y."/>
            <person name="Okamoto S."/>
            <person name="Okitani R."/>
            <person name="Kawakami T."/>
            <person name="Noguchi S."/>
            <person name="Itoh T."/>
            <person name="Shigeta K."/>
            <person name="Senba T."/>
            <person name="Matsumura K."/>
            <person name="Nakajima Y."/>
            <person name="Mizuno T."/>
            <person name="Morinaga M."/>
            <person name="Sasaki M."/>
            <person name="Togashi T."/>
            <person name="Oyama M."/>
            <person name="Hata H."/>
            <person name="Watanabe M."/>
            <person name="Komatsu T."/>
            <person name="Mizushima-Sugano J."/>
            <person name="Satoh T."/>
            <person name="Shirai Y."/>
            <person name="Takahashi Y."/>
            <person name="Nakagawa K."/>
            <person name="Okumura K."/>
            <person name="Nagase T."/>
            <person name="Nomura N."/>
            <person name="Kikuchi H."/>
            <person name="Masuho Y."/>
            <person name="Yamashita R."/>
            <person name="Nakai K."/>
            <person name="Yada T."/>
            <person name="Nakamura Y."/>
            <person name="Ohara O."/>
            <person name="Isogai T."/>
            <person name="Sugano S."/>
        </authorList>
    </citation>
    <scope>NUCLEOTIDE SEQUENCE [LARGE SCALE MRNA] (ISOFORM 3)</scope>
    <source>
        <tissue>Embryo</tissue>
    </source>
</reference>
<reference key="3">
    <citation type="journal article" date="2004" name="Nature">
        <title>DNA sequence and analysis of human chromosome 9.</title>
        <authorList>
            <person name="Humphray S.J."/>
            <person name="Oliver K."/>
            <person name="Hunt A.R."/>
            <person name="Plumb R.W."/>
            <person name="Loveland J.E."/>
            <person name="Howe K.L."/>
            <person name="Andrews T.D."/>
            <person name="Searle S."/>
            <person name="Hunt S.E."/>
            <person name="Scott C.E."/>
            <person name="Jones M.C."/>
            <person name="Ainscough R."/>
            <person name="Almeida J.P."/>
            <person name="Ambrose K.D."/>
            <person name="Ashwell R.I.S."/>
            <person name="Babbage A.K."/>
            <person name="Babbage S."/>
            <person name="Bagguley C.L."/>
            <person name="Bailey J."/>
            <person name="Banerjee R."/>
            <person name="Barker D.J."/>
            <person name="Barlow K.F."/>
            <person name="Bates K."/>
            <person name="Beasley H."/>
            <person name="Beasley O."/>
            <person name="Bird C.P."/>
            <person name="Bray-Allen S."/>
            <person name="Brown A.J."/>
            <person name="Brown J.Y."/>
            <person name="Burford D."/>
            <person name="Burrill W."/>
            <person name="Burton J."/>
            <person name="Carder C."/>
            <person name="Carter N.P."/>
            <person name="Chapman J.C."/>
            <person name="Chen Y."/>
            <person name="Clarke G."/>
            <person name="Clark S.Y."/>
            <person name="Clee C.M."/>
            <person name="Clegg S."/>
            <person name="Collier R.E."/>
            <person name="Corby N."/>
            <person name="Crosier M."/>
            <person name="Cummings A.T."/>
            <person name="Davies J."/>
            <person name="Dhami P."/>
            <person name="Dunn M."/>
            <person name="Dutta I."/>
            <person name="Dyer L.W."/>
            <person name="Earthrowl M.E."/>
            <person name="Faulkner L."/>
            <person name="Fleming C.J."/>
            <person name="Frankish A."/>
            <person name="Frankland J.A."/>
            <person name="French L."/>
            <person name="Fricker D.G."/>
            <person name="Garner P."/>
            <person name="Garnett J."/>
            <person name="Ghori J."/>
            <person name="Gilbert J.G.R."/>
            <person name="Glison C."/>
            <person name="Grafham D.V."/>
            <person name="Gribble S."/>
            <person name="Griffiths C."/>
            <person name="Griffiths-Jones S."/>
            <person name="Grocock R."/>
            <person name="Guy J."/>
            <person name="Hall R.E."/>
            <person name="Hammond S."/>
            <person name="Harley J.L."/>
            <person name="Harrison E.S.I."/>
            <person name="Hart E.A."/>
            <person name="Heath P.D."/>
            <person name="Henderson C.D."/>
            <person name="Hopkins B.L."/>
            <person name="Howard P.J."/>
            <person name="Howden P.J."/>
            <person name="Huckle E."/>
            <person name="Johnson C."/>
            <person name="Johnson D."/>
            <person name="Joy A.A."/>
            <person name="Kay M."/>
            <person name="Keenan S."/>
            <person name="Kershaw J.K."/>
            <person name="Kimberley A.M."/>
            <person name="King A."/>
            <person name="Knights A."/>
            <person name="Laird G.K."/>
            <person name="Langford C."/>
            <person name="Lawlor S."/>
            <person name="Leongamornlert D.A."/>
            <person name="Leversha M."/>
            <person name="Lloyd C."/>
            <person name="Lloyd D.M."/>
            <person name="Lovell J."/>
            <person name="Martin S."/>
            <person name="Mashreghi-Mohammadi M."/>
            <person name="Matthews L."/>
            <person name="McLaren S."/>
            <person name="McLay K.E."/>
            <person name="McMurray A."/>
            <person name="Milne S."/>
            <person name="Nickerson T."/>
            <person name="Nisbett J."/>
            <person name="Nordsiek G."/>
            <person name="Pearce A.V."/>
            <person name="Peck A.I."/>
            <person name="Porter K.M."/>
            <person name="Pandian R."/>
            <person name="Pelan S."/>
            <person name="Phillimore B."/>
            <person name="Povey S."/>
            <person name="Ramsey Y."/>
            <person name="Rand V."/>
            <person name="Scharfe M."/>
            <person name="Sehra H.K."/>
            <person name="Shownkeen R."/>
            <person name="Sims S.K."/>
            <person name="Skuce C.D."/>
            <person name="Smith M."/>
            <person name="Steward C.A."/>
            <person name="Swarbreck D."/>
            <person name="Sycamore N."/>
            <person name="Tester J."/>
            <person name="Thorpe A."/>
            <person name="Tracey A."/>
            <person name="Tromans A."/>
            <person name="Thomas D.W."/>
            <person name="Wall M."/>
            <person name="Wallis J.M."/>
            <person name="West A.P."/>
            <person name="Whitehead S.L."/>
            <person name="Willey D.L."/>
            <person name="Williams S.A."/>
            <person name="Wilming L."/>
            <person name="Wray P.W."/>
            <person name="Young L."/>
            <person name="Ashurst J.L."/>
            <person name="Coulson A."/>
            <person name="Blocker H."/>
            <person name="Durbin R.M."/>
            <person name="Sulston J.E."/>
            <person name="Hubbard T."/>
            <person name="Jackson M.J."/>
            <person name="Bentley D.R."/>
            <person name="Beck S."/>
            <person name="Rogers J."/>
            <person name="Dunham I."/>
        </authorList>
    </citation>
    <scope>NUCLEOTIDE SEQUENCE [LARGE SCALE GENOMIC DNA]</scope>
</reference>
<reference key="4">
    <citation type="submission" date="2005-07" db="EMBL/GenBank/DDBJ databases">
        <authorList>
            <person name="Mural R.J."/>
            <person name="Istrail S."/>
            <person name="Sutton G.G."/>
            <person name="Florea L."/>
            <person name="Halpern A.L."/>
            <person name="Mobarry C.M."/>
            <person name="Lippert R."/>
            <person name="Walenz B."/>
            <person name="Shatkay H."/>
            <person name="Dew I."/>
            <person name="Miller J.R."/>
            <person name="Flanigan M.J."/>
            <person name="Edwards N.J."/>
            <person name="Bolanos R."/>
            <person name="Fasulo D."/>
            <person name="Halldorsson B.V."/>
            <person name="Hannenhalli S."/>
            <person name="Turner R."/>
            <person name="Yooseph S."/>
            <person name="Lu F."/>
            <person name="Nusskern D.R."/>
            <person name="Shue B.C."/>
            <person name="Zheng X.H."/>
            <person name="Zhong F."/>
            <person name="Delcher A.L."/>
            <person name="Huson D.H."/>
            <person name="Kravitz S.A."/>
            <person name="Mouchard L."/>
            <person name="Reinert K."/>
            <person name="Remington K.A."/>
            <person name="Clark A.G."/>
            <person name="Waterman M.S."/>
            <person name="Eichler E.E."/>
            <person name="Adams M.D."/>
            <person name="Hunkapiller M.W."/>
            <person name="Myers E.W."/>
            <person name="Venter J.C."/>
        </authorList>
    </citation>
    <scope>NUCLEOTIDE SEQUENCE [LARGE SCALE GENOMIC DNA]</scope>
    <scope>VARIANT VAL-220</scope>
</reference>
<reference key="5">
    <citation type="journal article" date="2004" name="Genome Res.">
        <title>The status, quality, and expansion of the NIH full-length cDNA project: the Mammalian Gene Collection (MGC).</title>
        <authorList>
            <consortium name="The MGC Project Team"/>
        </authorList>
    </citation>
    <scope>NUCLEOTIDE SEQUENCE [LARGE SCALE MRNA] (ISOFORMS 1 AND 2)</scope>
    <scope>VARIANT VAL-220</scope>
    <source>
        <tissue>Mammary gland</tissue>
        <tissue>Pancreas</tissue>
    </source>
</reference>
<accession>Q8WV48</accession>
<accession>A6XND6</accession>
<accession>Q5T4R5</accession>
<accession>Q5T4R8</accession>
<accession>Q5T4R9</accession>
<accession>Q86VB6</accession>
<accession>Q8N2E4</accession>
<organism>
    <name type="scientific">Homo sapiens</name>
    <name type="common">Human</name>
    <dbReference type="NCBI Taxonomy" id="9606"/>
    <lineage>
        <taxon>Eukaryota</taxon>
        <taxon>Metazoa</taxon>
        <taxon>Chordata</taxon>
        <taxon>Craniata</taxon>
        <taxon>Vertebrata</taxon>
        <taxon>Euteleostomi</taxon>
        <taxon>Mammalia</taxon>
        <taxon>Eutheria</taxon>
        <taxon>Euarchontoglires</taxon>
        <taxon>Primates</taxon>
        <taxon>Haplorrhini</taxon>
        <taxon>Catarrhini</taxon>
        <taxon>Hominidae</taxon>
        <taxon>Homo</taxon>
    </lineage>
</organism>
<evidence type="ECO:0000255" key="1"/>
<evidence type="ECO:0000256" key="2">
    <source>
        <dbReference type="SAM" id="MobiDB-lite"/>
    </source>
</evidence>
<evidence type="ECO:0000269" key="3">
    <source>
    </source>
</evidence>
<evidence type="ECO:0000269" key="4">
    <source ref="1"/>
</evidence>
<evidence type="ECO:0000269" key="5">
    <source ref="4"/>
</evidence>
<evidence type="ECO:0000303" key="6">
    <source>
    </source>
</evidence>
<evidence type="ECO:0000303" key="7">
    <source>
    </source>
</evidence>
<evidence type="ECO:0000303" key="8">
    <source ref="1"/>
</evidence>
<evidence type="ECO:0000305" key="9"/>
<name>CC107_HUMAN</name>
<proteinExistence type="evidence at protein level"/>
<keyword id="KW-0025">Alternative splicing</keyword>
<keyword id="KW-0175">Coiled coil</keyword>
<keyword id="KW-0472">Membrane</keyword>
<keyword id="KW-1267">Proteomics identification</keyword>
<keyword id="KW-1185">Reference proteome</keyword>
<keyword id="KW-0732">Signal</keyword>
<keyword id="KW-0812">Transmembrane</keyword>
<keyword id="KW-1133">Transmembrane helix</keyword>
<protein>
    <recommendedName>
        <fullName>Coiled-coil domain-containing protein 107</fullName>
    </recommendedName>
</protein>
<gene>
    <name type="primary">CCDC107</name>
    <name type="ORF">PSEC0222</name>
</gene>